<accession>F4IHS2</accession>
<accession>F4IHS3</accession>
<accession>F4IHS4</accession>
<accession>Q5BN47</accession>
<accession>Q8L9D7</accession>
<accession>Q9AUB4</accession>
<accession>Q9SL27</accession>
<name>SYD_ARATH</name>
<comment type="function">
    <text evidence="6 7 8 9 10 12 13">Catalytic component of the chromatin structure-remodeling complex (RSC), which is involved in transcription regulation and nucleosome positioning. Controls stem cell fate via the transcription regulation of WUS in the shoot apical meristem, by modulating its promoter. LFY-dependent repressor of the meristem identity switch from vegetative to reproductive development probably by modulating chromatin state. Involved in the regulation of floral homeotic gene expression in response to environmental stimuli. Required for carpel and ovule development, and for cotyledon separation via the regulation of CUC2 transcription. Regulates the promoters of several genes downstream of the jasmonate (JA) and ethylene (ET) signaling pathways. Required for resistance against the necrotrophic pathogen B.cinerea but not the biotrophic pathogen P.syringae.</text>
</comment>
<comment type="subunit">
    <text evidence="11 13">Interacts with LFY (PubMed:22323601). Binds to BARD1/ROW1 (PubMed:18591352).</text>
</comment>
<comment type="interaction">
    <interactant intactId="EBI-15967899">
        <id>F4IHS2</id>
    </interactant>
    <interactant intactId="EBI-1644366">
        <id>Q00958</id>
        <label>LFY</label>
    </interactant>
    <organismsDiffer>false</organismsDiffer>
    <experiments>4</experiments>
</comment>
<comment type="interaction">
    <interactant intactId="EBI-15967899">
        <id>F4IHS2</id>
    </interactant>
    <interactant intactId="EBI-592020">
        <id>O22456</id>
        <label>SEP3</label>
    </interactant>
    <organismsDiffer>false</organismsDiffer>
    <experiments>2</experiments>
</comment>
<comment type="subcellular location">
    <subcellularLocation>
        <location>Cytoplasm</location>
    </subcellularLocation>
    <subcellularLocation>
        <location>Nucleus</location>
    </subcellularLocation>
</comment>
<comment type="alternative products">
    <event type="alternative splicing"/>
    <isoform>
        <id>F4IHS2-1</id>
        <name>1</name>
        <sequence type="displayed"/>
    </isoform>
    <isoform>
        <id>F4IHS2-2</id>
        <name>2</name>
        <sequence type="described" ref="VSP_046250"/>
    </isoform>
    <isoform>
        <id>F4IHS2-3</id>
        <name>3</name>
        <sequence type="described" ref="VSP_046249"/>
    </isoform>
</comment>
<comment type="tissue specificity">
    <text evidence="6 8">Mostly expressed in rapidly dividing cells in the vegetative, inflorescence, and root meristems, as well as in young leaf and flower primordia. Isoform 1 is predominantly found in seedlings whereas isoform 2 is present in both seedlings and inflorescences (at protein level).</text>
</comment>
<comment type="induction">
    <text evidence="12">By wounding.</text>
</comment>
<comment type="PTM">
    <text>Phosphorylated.</text>
</comment>
<comment type="disruption phenotype">
    <text evidence="6 7 9 10 12 13">Precocious transition from inflorescence to flower formation and impaired maintenance of the shoot apical meristem (SAM) during the reproductive phase. Abnormal flowers with splayed open first-whorl sepals due to outward bending of the pointy sepal tips. Reduced male fertility and reduced anther dehiscence. Partially unfused at the tip fourth-whorl carpels, with stigmatic tissue missing or placed internal to the carpel tip, leading to funnel shaped carpels. Female sterility ovule growth arrest at megagametogenesis. Fused cotyledons. Impaired expression of PDF1.2a, leading to reduced ethylene (ET) and jasmonic acid (JA) signaling. Reduced resistance toward B. cinerea.</text>
</comment>
<comment type="similarity">
    <text evidence="16">Belongs to the SNF2/RAD54 helicase family.</text>
</comment>
<comment type="sequence caution" evidence="16">
    <conflict type="erroneous gene model prediction">
        <sequence resource="EMBL-CDS" id="AAD29835"/>
    </conflict>
</comment>
<comment type="sequence caution" evidence="16">
    <conflict type="erroneous initiation">
        <sequence resource="EMBL-CDS" id="AAM66026"/>
    </conflict>
    <text>Truncated N-terminus.</text>
</comment>
<sequence length="3574" mass="389864">MTSSSHNIELEAAKFLHKLIQDSKDEPAKLATKLYVILQHMKTSGKENTMPYQVISRAMDTVVNQHGLDIEALKSSCLPHPGGTQTEDSGSAHLAGSSQAVGVSNEGKATLVENEMTKYDAFTSGRQLGGSNSASQTFYQGSGTQSNRSFDRESPSNLDSTSGISQPHNRSETMNQRDVKSSGKRKRGESSLSWDQNMDNSQIFDSHKIDDQTGEVSKIEMPGNSGDIRNLHVGLSSDAFTTPQCGWQSSEATAIRPAIHKEPGNNVAGEGFLPSGSPFREQQLKQLRAQCLVFLALRNGLVPKKLHVEIALRNTFREEDGFRGELFDPKGRTHTSSDLGGIPDVSALLSRTDNPTGRLDEMDFSSKETERSRLGEKSFANTVFSDGQKLLASRIPSSQAQTQVAVSHSQLTFSPGLTKNTPSEMVGWTGVIKTNDLSTSAVQLDEFHSSDEEEGNLQPSPKYTMSQKWIMGRQNKRLLVDRSWSLKQQKADQAIGSRFNELKESVSLSDDISAKTKSVIELKKLQLLNLQRRLRSEFVYNFFKPIATDVEHLKSYKKHKHGRRIKQLEKYEQKMKEERQRRIRERQKEFFGGLEVHKEKLEDLFKVRRERLKGFNRYAKEFHKRKERLHREKIDKIQREKINLLKINDVEGYLRMVQDAKSDRVKQLLKETEKYLQKLGSKLKEAKLLTSRFENEADETRTSNATDDETLIENEDESDQAKHYLESNEKYYLMAHSIKENINEQPSSLVGGKLREYQMNGLRWLVSLYNNHLNGILADEMGLGKTVQVISLICYLMETKNDRGPFLVVVPSSVLPGWQSEINFWAPSIHKIVYCGTPDERRKLFKEQIVHQKFNVLLTTYEYLMNKHDRPKLSKIHWHYIIIDEGHRIKNASCKLNADLKHYVSSHRLLLTGTPLQNNLEELWALLNFLLPNIFNSSEDFSQWFNKPFQSNGESSAEEALLSEEENLLIINRLHQVLRPFVLRRLKHKVENELPEKIERLIRCEASAYQKLLMKRVEDNLGSIGNAKSRAVHNSVMELRNICNHPYLSQLHSEEVNNIIPKHFLPPIVRLCGKLEMLDRMLPKLKATDHRVLFFSTMTRLLDVMEDYLTLKGYKYLRLDGQTSGGDRGALIDGFNKSGSPFFIFLLSIRAGGVGVNLQAADTVILFDTDWNPQVDLQAQARAHRIGQKKDVLVLRFETVNSVEEQVRASAEHKLGVANQSITAGFFDNNTSAEDRKEYLESLLRESKKEEDAPVLDDDALNDLIARRESEIDIFESIDKQRKENEMETWNTLVHGPGSDSFAHIPSIPSRLVTEDDLKLLYETMKLNDVPMVAKESTVGMKRKDGSMGGLDTHQYGRGKRAREVRSYEEKLTEEEFEKLCQTESPDSPQGKGEGSERSLANDTSNIPVENSSDTLLPTSPTQAITVQPMEPVRPQSHTLKEETQPIKRGRGRPKRTDKALTPVSLSAVSRTQATGNAISSAATGLDFVSSDKRLEAASHPTSSLALTSPDLSGPPGFQSLPASPAPTPIRGRGRGRSRGRGAGRGRRVEGVLHGSNSSITQRTETATSLASDAEATKFALPRSASEIVSRVPKANEGSTSNPDQVSPVHSATTALRSDKAADKDLDAPPGFDSGSHVQTLNVLENSSERKAFAVKKRPLIQGVSSQHPGPNKQPLDLPVSTSSTLLGGGPVQNQNAVSSVCDGSKSPSEGRTYTALQGVTTAPSDATLPMSSQPSDATLPMSSQPVGSTVEAQEANVPSLPAALPAKRRVRNLPSRGETPKRQGKRRGQPLPATDASSARSTGLTPQIEVKVGNLSGTKAKFDAVAKEQPHFSQSVAPDIHSSGSLSQEIRRDTSGTGGSARKQTADVTDVARVMKEIFSETSLLKHKVGEPSATTRTNVPDAQSPGEMNLHTVETHKAEDSSGLKNQEALYNLSKADKLVSDIPHPVPGDLTTSGSVANKDVDIGSSKVAAENELVKIPGGDVDSSVIQLSLGNTLTAKSSLEKCTADQLLGEKLSQEGETTPASDGETCHLAEETASSLSYVRSEPTASASTTAEPLPTDKLEKNISFQDEVKTLNGDKREAILLSSEEQTNVNSKIETNSEELQASRTDEVPHVDGKSVDVANQTVKEDEAKHSVEIQSSMLEPDELPNAGQKGHSSIDLQPLVLVTSNENAMSLDDKDYDPISKSADIEQDPEESVFVQGVGRPKVGTADTQMEDTNDAKLLVGCSVESEEKEKTLQSLIPGDDADTEQDPEESVSDQRPKVGSAYTQMEDTDEAKLLMGCSVESEEKEKTLQSHIPGDDADTEKNPEESVSVQGVDRPKVGTTDTQMEDTNDAKLLVGCSVASEEKEKTLQSHIPGDDADTEQNPEESVSVQGVNRPKVGNANTQMEDTDEAKVLVGCSVESEEKEKTLQSHIPGDDADTEQNPEESVSNFDRPKDGTADTHMEDIDDAKLLVGCSVESEEKEKSLQSHMPSDDAVLHAPFENTKDSKGDDLHGESLVSCPTMEVMEQKGFESETHARTDSGGIDRGNEVSENMSDGVKMNISSVQVPDASHDLNVSQDQTDIPLVGGIDPEHVQENVDVPASPHGAAPNIVIFQSEGHLSPSILPDDVAGQLESMSNDEKTNISSEQVPDVSHDLKVSQDQTDIPPVGGIVPENLQEIVDVPASPHGVVPDVVVSQSEEIQSPSILPDDVPGQPDDGNCEKMDTMQNNTSIDIGITSGKTCQPSSSTQPEDENRNSLSHCEPSEVVEQRDSRDQVCIGSVESQVEISSAILENRSADIQPPQSILVDQKDIEESKEPGIESADVSLHQLADIQAEPSNLVDQMDIEESKEPGTESADVSLHQLADIQPGPSILVDQMDTEKSKEPGTESADVSLHQLADIQPGPSILVDQMDTEKSKEPGTESADVSLHQLADIQPGPSILVDQMDTEEFKNPDVSLHQLADIEPSLSISAVQKNIEDKDQSHVETAGSELVDVSAECSTEPQVQLPPSSEPVGDMHVHLGASKSEIVAEGTDFSSSLPKTEEENAKSQLADTEPSSSLTAVQKNIEDQVETAGCEFVVVSTGCSTEPQVQLPPSAEPVVAEGTEFPSSLLMTGVDNSSHLMTGVDNAKTHLADVVPSSSPTTMEKNIEAQDQDQVTTGGCGLVDVLTECSSEPQLQLPPSAEPVISEGTELATLPLTEEENADSQLANIEPSSSPSVVEKNIEAQDQDQVKTAGCELVSTGCSSEPQVHLPPSAEPDGDIHVHLKETEKSESMVVVGEGTAFPSSLPVTEEGNAESQLADTEPFTSPTVVEKNIKDQEQVETTGCGLVDDSTGCSSEPQVQLPPSAEPMEGTHMHLEETKKSETVVTEIQLADIDPSFSLIVVQTNIEDQDQIETGGCDLINVPSGCSTEPQIQLSSSAEPEEGMHIHLEAAMNSETVVTEGSELPSSLPMTEDENADGQLAEVEPSVSLTVEQTNIEEKDHIETAECELVDVSPGCSSQPEVKFPPSPDAVGGMDVHLETVVTEDTDSNSSLPKTEEKDAENPSDRLDGESDGTTVATVEGTCVESNSLVAEESNIEVPKDNEDV</sequence>
<dbReference type="EC" id="3.6.4.-"/>
<dbReference type="EMBL" id="AF247809">
    <property type="protein sequence ID" value="AAK31908.1"/>
    <property type="molecule type" value="mRNA"/>
</dbReference>
<dbReference type="EMBL" id="AY927849">
    <property type="protein sequence ID" value="AAX22009.1"/>
    <property type="molecule type" value="mRNA"/>
</dbReference>
<dbReference type="EMBL" id="AC006202">
    <property type="protein sequence ID" value="AAD29835.2"/>
    <property type="status" value="ALT_SEQ"/>
    <property type="molecule type" value="Genomic_DNA"/>
</dbReference>
<dbReference type="EMBL" id="CP002685">
    <property type="protein sequence ID" value="AEC08099.1"/>
    <property type="molecule type" value="Genomic_DNA"/>
</dbReference>
<dbReference type="EMBL" id="CP002685">
    <property type="protein sequence ID" value="AEC08100.1"/>
    <property type="molecule type" value="Genomic_DNA"/>
</dbReference>
<dbReference type="EMBL" id="CP002685">
    <property type="protein sequence ID" value="AEC08101.1"/>
    <property type="molecule type" value="Genomic_DNA"/>
</dbReference>
<dbReference type="EMBL" id="CP002685">
    <property type="protein sequence ID" value="ANM63245.1"/>
    <property type="molecule type" value="Genomic_DNA"/>
</dbReference>
<dbReference type="EMBL" id="AY088490">
    <property type="protein sequence ID" value="AAM66026.1"/>
    <property type="status" value="ALT_INIT"/>
    <property type="molecule type" value="mRNA"/>
</dbReference>
<dbReference type="PIR" id="A84683">
    <property type="entry name" value="A84683"/>
</dbReference>
<dbReference type="RefSeq" id="NP_001077971.1">
    <molecule id="F4IHS2-2"/>
    <property type="nucleotide sequence ID" value="NM_001084502.2"/>
</dbReference>
<dbReference type="RefSeq" id="NP_001325347.1">
    <molecule id="F4IHS2-2"/>
    <property type="nucleotide sequence ID" value="NM_001336158.1"/>
</dbReference>
<dbReference type="RefSeq" id="NP_850116.1">
    <molecule id="F4IHS2-1"/>
    <property type="nucleotide sequence ID" value="NM_179785.3"/>
</dbReference>
<dbReference type="RefSeq" id="NP_850117.1">
    <molecule id="F4IHS2-3"/>
    <property type="nucleotide sequence ID" value="NM_179786.2"/>
</dbReference>
<dbReference type="SMR" id="F4IHS2"/>
<dbReference type="BioGRID" id="2725">
    <property type="interactions" value="34"/>
</dbReference>
<dbReference type="ComplexPortal" id="CPX-7726">
    <property type="entry name" value="SYD-associated SWI/SNF ATP-dependent chromatin remodeling complex"/>
</dbReference>
<dbReference type="DIP" id="DIP-60019N"/>
<dbReference type="FunCoup" id="F4IHS2">
    <property type="interactions" value="708"/>
</dbReference>
<dbReference type="IntAct" id="F4IHS2">
    <property type="interactions" value="2"/>
</dbReference>
<dbReference type="STRING" id="3702.F4IHS2"/>
<dbReference type="GlyGen" id="F4IHS2">
    <property type="glycosylation" value="6 sites, 1 O-linked glycan (5 sites)"/>
</dbReference>
<dbReference type="iPTMnet" id="F4IHS2"/>
<dbReference type="PaxDb" id="3702-AT2G28290.1"/>
<dbReference type="ProteomicsDB" id="232978">
    <molecule id="F4IHS2-1"/>
</dbReference>
<dbReference type="EnsemblPlants" id="AT2G28290.1">
    <molecule id="F4IHS2-1"/>
    <property type="protein sequence ID" value="AT2G28290.1"/>
    <property type="gene ID" value="AT2G28290"/>
</dbReference>
<dbReference type="EnsemblPlants" id="AT2G28290.2">
    <molecule id="F4IHS2-3"/>
    <property type="protein sequence ID" value="AT2G28290.2"/>
    <property type="gene ID" value="AT2G28290"/>
</dbReference>
<dbReference type="EnsemblPlants" id="AT2G28290.3">
    <molecule id="F4IHS2-2"/>
    <property type="protein sequence ID" value="AT2G28290.3"/>
    <property type="gene ID" value="AT2G28290"/>
</dbReference>
<dbReference type="EnsemblPlants" id="AT2G28290.4">
    <molecule id="F4IHS2-2"/>
    <property type="protein sequence ID" value="AT2G28290.4"/>
    <property type="gene ID" value="AT2G28290"/>
</dbReference>
<dbReference type="GeneID" id="817375"/>
<dbReference type="Gramene" id="AT2G28290.1">
    <molecule id="F4IHS2-1"/>
    <property type="protein sequence ID" value="AT2G28290.1"/>
    <property type="gene ID" value="AT2G28290"/>
</dbReference>
<dbReference type="Gramene" id="AT2G28290.2">
    <molecule id="F4IHS2-3"/>
    <property type="protein sequence ID" value="AT2G28290.2"/>
    <property type="gene ID" value="AT2G28290"/>
</dbReference>
<dbReference type="Gramene" id="AT2G28290.3">
    <molecule id="F4IHS2-2"/>
    <property type="protein sequence ID" value="AT2G28290.3"/>
    <property type="gene ID" value="AT2G28290"/>
</dbReference>
<dbReference type="Gramene" id="AT2G28290.4">
    <molecule id="F4IHS2-2"/>
    <property type="protein sequence ID" value="AT2G28290.4"/>
    <property type="gene ID" value="AT2G28290"/>
</dbReference>
<dbReference type="KEGG" id="ath:AT2G28290"/>
<dbReference type="Araport" id="AT2G28290"/>
<dbReference type="TAIR" id="AT2G28290">
    <property type="gene designation" value="SYD"/>
</dbReference>
<dbReference type="eggNOG" id="KOG0386">
    <property type="taxonomic scope" value="Eukaryota"/>
</dbReference>
<dbReference type="eggNOG" id="KOG1181">
    <property type="taxonomic scope" value="Eukaryota"/>
</dbReference>
<dbReference type="InParanoid" id="F4IHS2"/>
<dbReference type="CD-CODE" id="4299E36E">
    <property type="entry name" value="Nucleolus"/>
</dbReference>
<dbReference type="PRO" id="PR:F4IHS2"/>
<dbReference type="Proteomes" id="UP000006548">
    <property type="component" value="Chromosome 2"/>
</dbReference>
<dbReference type="ExpressionAtlas" id="F4IHS2">
    <property type="expression patterns" value="baseline and differential"/>
</dbReference>
<dbReference type="GO" id="GO:0005829">
    <property type="term" value="C:cytosol"/>
    <property type="evidence" value="ECO:0007005"/>
    <property type="project" value="TAIR"/>
</dbReference>
<dbReference type="GO" id="GO:0005634">
    <property type="term" value="C:nucleus"/>
    <property type="evidence" value="ECO:0000314"/>
    <property type="project" value="TAIR"/>
</dbReference>
<dbReference type="GO" id="GO:0005524">
    <property type="term" value="F:ATP binding"/>
    <property type="evidence" value="ECO:0007669"/>
    <property type="project" value="UniProtKB-KW"/>
</dbReference>
<dbReference type="GO" id="GO:0016887">
    <property type="term" value="F:ATP hydrolysis activity"/>
    <property type="evidence" value="ECO:0000250"/>
    <property type="project" value="TAIR"/>
</dbReference>
<dbReference type="GO" id="GO:0003682">
    <property type="term" value="F:chromatin binding"/>
    <property type="evidence" value="ECO:0000314"/>
    <property type="project" value="TAIR"/>
</dbReference>
<dbReference type="GO" id="GO:0003677">
    <property type="term" value="F:DNA binding"/>
    <property type="evidence" value="ECO:0007669"/>
    <property type="project" value="UniProtKB-KW"/>
</dbReference>
<dbReference type="GO" id="GO:0004386">
    <property type="term" value="F:helicase activity"/>
    <property type="evidence" value="ECO:0007669"/>
    <property type="project" value="UniProtKB-KW"/>
</dbReference>
<dbReference type="GO" id="GO:0042393">
    <property type="term" value="F:histone binding"/>
    <property type="evidence" value="ECO:0007669"/>
    <property type="project" value="InterPro"/>
</dbReference>
<dbReference type="GO" id="GO:0006952">
    <property type="term" value="P:defense response"/>
    <property type="evidence" value="ECO:0007669"/>
    <property type="project" value="UniProtKB-KW"/>
</dbReference>
<dbReference type="GO" id="GO:0040029">
    <property type="term" value="P:epigenetic regulation of gene expression"/>
    <property type="evidence" value="ECO:0000315"/>
    <property type="project" value="TAIR"/>
</dbReference>
<dbReference type="GO" id="GO:0009873">
    <property type="term" value="P:ethylene-activated signaling pathway"/>
    <property type="evidence" value="ECO:0007669"/>
    <property type="project" value="UniProtKB-KW"/>
</dbReference>
<dbReference type="GO" id="GO:0009908">
    <property type="term" value="P:flower development"/>
    <property type="evidence" value="ECO:0000315"/>
    <property type="project" value="TAIR"/>
</dbReference>
<dbReference type="GO" id="GO:0010199">
    <property type="term" value="P:organ boundary specification between lateral organs and the meristem"/>
    <property type="evidence" value="ECO:0000316"/>
    <property type="project" value="TAIR"/>
</dbReference>
<dbReference type="GO" id="GO:1900150">
    <property type="term" value="P:regulation of defense response to fungus"/>
    <property type="evidence" value="ECO:0000315"/>
    <property type="project" value="UniProtKB"/>
</dbReference>
<dbReference type="GO" id="GO:0006355">
    <property type="term" value="P:regulation of DNA-templated transcription"/>
    <property type="evidence" value="ECO:0007669"/>
    <property type="project" value="InterPro"/>
</dbReference>
<dbReference type="GO" id="GO:0010104">
    <property type="term" value="P:regulation of ethylene-activated signaling pathway"/>
    <property type="evidence" value="ECO:0000315"/>
    <property type="project" value="UniProtKB"/>
</dbReference>
<dbReference type="GO" id="GO:2000022">
    <property type="term" value="P:regulation of jasmonic acid mediated signaling pathway"/>
    <property type="evidence" value="ECO:0000315"/>
    <property type="project" value="UniProtKB"/>
</dbReference>
<dbReference type="GO" id="GO:0009611">
    <property type="term" value="P:response to wounding"/>
    <property type="evidence" value="ECO:0000270"/>
    <property type="project" value="TAIR"/>
</dbReference>
<dbReference type="CDD" id="cd17996">
    <property type="entry name" value="DEXHc_SMARCA2_SMARCA4"/>
    <property type="match status" value="1"/>
</dbReference>
<dbReference type="CDD" id="cd18793">
    <property type="entry name" value="SF2_C_SNF"/>
    <property type="match status" value="1"/>
</dbReference>
<dbReference type="FunFam" id="3.40.50.10810:FF:000016">
    <property type="entry name" value="Chromatin structure-remodeling complex protein SYD"/>
    <property type="match status" value="1"/>
</dbReference>
<dbReference type="FunFam" id="3.40.50.300:FF:000871">
    <property type="entry name" value="Chromatin structure-remodeling complex protein SYD"/>
    <property type="match status" value="1"/>
</dbReference>
<dbReference type="Gene3D" id="3.40.50.300">
    <property type="entry name" value="P-loop containing nucleotide triphosphate hydrolases"/>
    <property type="match status" value="1"/>
</dbReference>
<dbReference type="Gene3D" id="3.40.50.10810">
    <property type="entry name" value="Tandem AAA-ATPase domain"/>
    <property type="match status" value="1"/>
</dbReference>
<dbReference type="InterPro" id="IPR014978">
    <property type="entry name" value="Gln-Leu-Gln_QLQ"/>
</dbReference>
<dbReference type="InterPro" id="IPR014001">
    <property type="entry name" value="Helicase_ATP-bd"/>
</dbReference>
<dbReference type="InterPro" id="IPR001650">
    <property type="entry name" value="Helicase_C-like"/>
</dbReference>
<dbReference type="InterPro" id="IPR014012">
    <property type="entry name" value="HSA_dom"/>
</dbReference>
<dbReference type="InterPro" id="IPR027417">
    <property type="entry name" value="P-loop_NTPase"/>
</dbReference>
<dbReference type="InterPro" id="IPR029295">
    <property type="entry name" value="SnAC"/>
</dbReference>
<dbReference type="InterPro" id="IPR038718">
    <property type="entry name" value="SNF2-like_sf"/>
</dbReference>
<dbReference type="InterPro" id="IPR049730">
    <property type="entry name" value="SNF2/RAD54-like_C"/>
</dbReference>
<dbReference type="InterPro" id="IPR000330">
    <property type="entry name" value="SNF2_N"/>
</dbReference>
<dbReference type="PANTHER" id="PTHR10799">
    <property type="entry name" value="SNF2/RAD54 HELICASE FAMILY"/>
    <property type="match status" value="1"/>
</dbReference>
<dbReference type="Pfam" id="PF00271">
    <property type="entry name" value="Helicase_C"/>
    <property type="match status" value="1"/>
</dbReference>
<dbReference type="Pfam" id="PF14619">
    <property type="entry name" value="SnAC"/>
    <property type="match status" value="1"/>
</dbReference>
<dbReference type="Pfam" id="PF00176">
    <property type="entry name" value="SNF2-rel_dom"/>
    <property type="match status" value="1"/>
</dbReference>
<dbReference type="SMART" id="SM00487">
    <property type="entry name" value="DEXDc"/>
    <property type="match status" value="1"/>
</dbReference>
<dbReference type="SMART" id="SM00490">
    <property type="entry name" value="HELICc"/>
    <property type="match status" value="1"/>
</dbReference>
<dbReference type="SMART" id="SM00951">
    <property type="entry name" value="QLQ"/>
    <property type="match status" value="1"/>
</dbReference>
<dbReference type="SMART" id="SM01314">
    <property type="entry name" value="SnAC"/>
    <property type="match status" value="1"/>
</dbReference>
<dbReference type="SUPFAM" id="SSF52540">
    <property type="entry name" value="P-loop containing nucleoside triphosphate hydrolases"/>
    <property type="match status" value="2"/>
</dbReference>
<dbReference type="PROSITE" id="PS51192">
    <property type="entry name" value="HELICASE_ATP_BIND_1"/>
    <property type="match status" value="1"/>
</dbReference>
<dbReference type="PROSITE" id="PS51194">
    <property type="entry name" value="HELICASE_CTER"/>
    <property type="match status" value="1"/>
</dbReference>
<dbReference type="PROSITE" id="PS51204">
    <property type="entry name" value="HSA"/>
    <property type="match status" value="1"/>
</dbReference>
<feature type="chain" id="PRO_0000421936" description="Chromatin structure-remodeling complex protein SYD">
    <location>
        <begin position="1"/>
        <end position="3574"/>
    </location>
</feature>
<feature type="domain" description="HSA" evidence="4">
    <location>
        <begin position="573"/>
        <end position="647"/>
    </location>
</feature>
<feature type="domain" description="Helicase ATP-binding" evidence="2">
    <location>
        <begin position="766"/>
        <end position="933"/>
    </location>
</feature>
<feature type="domain" description="Helicase C-terminal" evidence="3">
    <location>
        <begin position="1077"/>
        <end position="1223"/>
    </location>
</feature>
<feature type="region of interest" description="Disordered" evidence="5">
    <location>
        <begin position="76"/>
        <end position="105"/>
    </location>
</feature>
<feature type="region of interest" description="Disordered" evidence="5">
    <location>
        <begin position="123"/>
        <end position="211"/>
    </location>
</feature>
<feature type="region of interest" description="Disordered" evidence="5">
    <location>
        <begin position="328"/>
        <end position="372"/>
    </location>
</feature>
<feature type="region of interest" description="Disordered" evidence="5">
    <location>
        <begin position="1342"/>
        <end position="1472"/>
    </location>
</feature>
<feature type="region of interest" description="Disordered" evidence="5">
    <location>
        <begin position="1500"/>
        <end position="1575"/>
    </location>
</feature>
<feature type="region of interest" description="Disordered" evidence="5">
    <location>
        <begin position="1588"/>
        <end position="1637"/>
    </location>
</feature>
<feature type="region of interest" description="Disordered" evidence="5">
    <location>
        <begin position="1690"/>
        <end position="1811"/>
    </location>
</feature>
<feature type="region of interest" description="Disordered" evidence="5">
    <location>
        <begin position="1830"/>
        <end position="1868"/>
    </location>
</feature>
<feature type="region of interest" description="Disordered" evidence="5">
    <location>
        <begin position="2040"/>
        <end position="2068"/>
    </location>
</feature>
<feature type="region of interest" description="Disordered" evidence="5">
    <location>
        <begin position="2089"/>
        <end position="2115"/>
    </location>
</feature>
<feature type="region of interest" description="Disordered" evidence="5">
    <location>
        <begin position="2143"/>
        <end position="2162"/>
    </location>
</feature>
<feature type="region of interest" description="Disordered" evidence="5">
    <location>
        <begin position="2179"/>
        <end position="2220"/>
    </location>
</feature>
<feature type="region of interest" description="Disordered" evidence="5">
    <location>
        <begin position="2235"/>
        <end position="2338"/>
    </location>
</feature>
<feature type="region of interest" description="Disordered" evidence="5">
    <location>
        <begin position="2350"/>
        <end position="2451"/>
    </location>
</feature>
<feature type="region of interest" description="Disordered" evidence="5">
    <location>
        <begin position="2517"/>
        <end position="2538"/>
    </location>
</feature>
<feature type="region of interest" description="Disordered" evidence="5">
    <location>
        <begin position="2684"/>
        <end position="2703"/>
    </location>
</feature>
<feature type="region of interest" description="Disordered" evidence="5">
    <location>
        <begin position="2718"/>
        <end position="2759"/>
    </location>
</feature>
<feature type="region of interest" description="Disordered" evidence="5">
    <location>
        <begin position="2865"/>
        <end position="2884"/>
    </location>
</feature>
<feature type="region of interest" description="Disordered" evidence="5">
    <location>
        <begin position="3017"/>
        <end position="3045"/>
    </location>
</feature>
<feature type="region of interest" description="Disordered" evidence="5">
    <location>
        <begin position="3189"/>
        <end position="3208"/>
    </location>
</feature>
<feature type="region of interest" description="Disordered" evidence="5">
    <location>
        <begin position="3316"/>
        <end position="3337"/>
    </location>
</feature>
<feature type="region of interest" description="Disordered" evidence="5">
    <location>
        <begin position="3512"/>
        <end position="3574"/>
    </location>
</feature>
<feature type="short sequence motif" description="DEAH box">
    <location>
        <begin position="884"/>
        <end position="887"/>
    </location>
</feature>
<feature type="short sequence motif" description="Nuclear localization signal" evidence="1">
    <location>
        <begin position="1266"/>
        <end position="1273"/>
    </location>
</feature>
<feature type="compositionally biased region" description="Polar residues" evidence="5">
    <location>
        <begin position="124"/>
        <end position="148"/>
    </location>
</feature>
<feature type="compositionally biased region" description="Polar residues" evidence="5">
    <location>
        <begin position="155"/>
        <end position="168"/>
    </location>
</feature>
<feature type="compositionally biased region" description="Basic and acidic residues" evidence="5">
    <location>
        <begin position="169"/>
        <end position="181"/>
    </location>
</feature>
<feature type="compositionally biased region" description="Polar residues" evidence="5">
    <location>
        <begin position="194"/>
        <end position="204"/>
    </location>
</feature>
<feature type="compositionally biased region" description="Basic and acidic residues" evidence="5">
    <location>
        <begin position="358"/>
        <end position="372"/>
    </location>
</feature>
<feature type="compositionally biased region" description="Basic and acidic residues" evidence="5">
    <location>
        <begin position="1362"/>
        <end position="1371"/>
    </location>
</feature>
<feature type="compositionally biased region" description="Polar residues" evidence="5">
    <location>
        <begin position="1399"/>
        <end position="1426"/>
    </location>
</feature>
<feature type="compositionally biased region" description="Polar residues" evidence="5">
    <location>
        <begin position="1500"/>
        <end position="1511"/>
    </location>
</feature>
<feature type="compositionally biased region" description="Basic residues" evidence="5">
    <location>
        <begin position="1532"/>
        <end position="1546"/>
    </location>
</feature>
<feature type="compositionally biased region" description="Polar residues" evidence="5">
    <location>
        <begin position="1555"/>
        <end position="1571"/>
    </location>
</feature>
<feature type="compositionally biased region" description="Polar residues" evidence="5">
    <location>
        <begin position="1597"/>
        <end position="1614"/>
    </location>
</feature>
<feature type="compositionally biased region" description="Basic and acidic residues" evidence="5">
    <location>
        <begin position="1617"/>
        <end position="1627"/>
    </location>
</feature>
<feature type="compositionally biased region" description="Polar residues" evidence="5">
    <location>
        <begin position="1690"/>
        <end position="1699"/>
    </location>
</feature>
<feature type="compositionally biased region" description="Polar residues" evidence="5">
    <location>
        <begin position="1706"/>
        <end position="1752"/>
    </location>
</feature>
<feature type="compositionally biased region" description="Polar residues" evidence="5">
    <location>
        <begin position="1796"/>
        <end position="1806"/>
    </location>
</feature>
<feature type="compositionally biased region" description="Polar residues" evidence="5">
    <location>
        <begin position="1832"/>
        <end position="1849"/>
    </location>
</feature>
<feature type="compositionally biased region" description="Polar residues" evidence="5">
    <location>
        <begin position="2040"/>
        <end position="2057"/>
    </location>
</feature>
<feature type="compositionally biased region" description="Polar residues" evidence="5">
    <location>
        <begin position="2090"/>
        <end position="2110"/>
    </location>
</feature>
<feature type="compositionally biased region" description="Acidic residues" evidence="5">
    <location>
        <begin position="2248"/>
        <end position="2260"/>
    </location>
</feature>
<feature type="compositionally biased region" description="Basic and acidic residues" evidence="5">
    <location>
        <begin position="2438"/>
        <end position="2451"/>
    </location>
</feature>
<feature type="compositionally biased region" description="Polar residues" evidence="5">
    <location>
        <begin position="2718"/>
        <end position="2735"/>
    </location>
</feature>
<feature type="compositionally biased region" description="Polar residues" evidence="5">
    <location>
        <begin position="3034"/>
        <end position="3045"/>
    </location>
</feature>
<feature type="compositionally biased region" description="Polar residues" evidence="5">
    <location>
        <begin position="3191"/>
        <end position="3204"/>
    </location>
</feature>
<feature type="compositionally biased region" description="Basic and acidic residues" evidence="5">
    <location>
        <begin position="3523"/>
        <end position="3538"/>
    </location>
</feature>
<feature type="binding site" evidence="2">
    <location>
        <begin position="779"/>
        <end position="786"/>
    </location>
    <ligand>
        <name>ATP</name>
        <dbReference type="ChEBI" id="CHEBI:30616"/>
    </ligand>
</feature>
<feature type="splice variant" id="VSP_046249" description="In isoform 3." evidence="15">
    <location>
        <begin position="3339"/>
        <end position="3383"/>
    </location>
</feature>
<feature type="splice variant" id="VSP_046250" description="In isoform 2." evidence="14">
    <location>
        <begin position="3339"/>
        <end position="3369"/>
    </location>
</feature>
<feature type="mutagenesis site" description="In syd-1; precocious transition from inflorescence to flower formation, abnormal flowers exhibiting variable petals and stamens number and position as well as some mosaic organs (stamenoid petals)." evidence="6">
    <original>G</original>
    <variation>E</variation>
    <location>
        <position position="1153"/>
    </location>
</feature>
<feature type="sequence conflict" description="In Ref. 1; AAK31908 and 2; AAX22009." evidence="16" ref="1 2">
    <original>Y</original>
    <variation>E</variation>
    <location>
        <position position="757"/>
    </location>
</feature>
<evidence type="ECO:0000250" key="1"/>
<evidence type="ECO:0000255" key="2">
    <source>
        <dbReference type="PROSITE-ProRule" id="PRU00541"/>
    </source>
</evidence>
<evidence type="ECO:0000255" key="3">
    <source>
        <dbReference type="PROSITE-ProRule" id="PRU00542"/>
    </source>
</evidence>
<evidence type="ECO:0000255" key="4">
    <source>
        <dbReference type="PROSITE-ProRule" id="PRU00549"/>
    </source>
</evidence>
<evidence type="ECO:0000256" key="5">
    <source>
        <dbReference type="SAM" id="MobiDB-lite"/>
    </source>
</evidence>
<evidence type="ECO:0000269" key="6">
    <source>
    </source>
</evidence>
<evidence type="ECO:0000269" key="7">
    <source>
    </source>
</evidence>
<evidence type="ECO:0000269" key="8">
    <source>
    </source>
</evidence>
<evidence type="ECO:0000269" key="9">
    <source>
    </source>
</evidence>
<evidence type="ECO:0000269" key="10">
    <source>
    </source>
</evidence>
<evidence type="ECO:0000269" key="11">
    <source>
    </source>
</evidence>
<evidence type="ECO:0000269" key="12">
    <source>
    </source>
</evidence>
<evidence type="ECO:0000269" key="13">
    <source>
    </source>
</evidence>
<evidence type="ECO:0000303" key="14">
    <source>
    </source>
</evidence>
<evidence type="ECO:0000303" key="15">
    <source ref="5"/>
</evidence>
<evidence type="ECO:0000305" key="16"/>
<proteinExistence type="evidence at protein level"/>
<protein>
    <recommendedName>
        <fullName>Chromatin structure-remodeling complex protein SYD</fullName>
        <ecNumber>3.6.4.-</ecNumber>
    </recommendedName>
    <alternativeName>
        <fullName>ATP-dependent helicase SYD</fullName>
    </alternativeName>
    <alternativeName>
        <fullName>Protein CHROMATIN REMODELING 3</fullName>
    </alternativeName>
    <alternativeName>
        <fullName>Protein SPLAYED</fullName>
    </alternativeName>
</protein>
<reference key="1">
    <citation type="journal article" date="2002" name="Curr. Biol.">
        <title>SPLAYED, a novel SWI/SNF ATPase homolog, controls reproductive development in Arabidopsis.</title>
        <authorList>
            <person name="Wagner D."/>
            <person name="Meyerowitz E.M."/>
        </authorList>
    </citation>
    <scope>NUCLEOTIDE SEQUENCE [MRNA] (ISOFORM 1)</scope>
    <scope>FUNCTION</scope>
    <scope>DISRUPTION PHENOTYPE</scope>
    <scope>MUTAGENESIS OF GLY-1153</scope>
    <scope>TISSUE SPECIFICITY</scope>
    <source>
        <strain>cv. Landsberg erecta</strain>
    </source>
</reference>
<reference key="2">
    <citation type="journal article" date="2006" name="Plant J.">
        <title>The N-terminal ATPase AT-hook-containing region of the Arabidopsis chromatin-remodeling protein SPLAYED is sufficient for biological activity.</title>
        <authorList>
            <person name="Su Y."/>
            <person name="Kwon C.S."/>
            <person name="Bezhani S."/>
            <person name="Huvermann B."/>
            <person name="Chen C."/>
            <person name="Peragine A."/>
            <person name="Kennedy J.F."/>
            <person name="Wagner D."/>
        </authorList>
    </citation>
    <scope>NUCLEOTIDE SEQUENCE [MRNA] (ISOFORM 2)</scope>
    <scope>FUNCTION</scope>
    <scope>SUBCELLULAR LOCATION</scope>
    <scope>ALTERNATIVE SPLICING</scope>
    <scope>TISSUE SPECIFICITY</scope>
</reference>
<reference key="3">
    <citation type="journal article" date="1999" name="Nature">
        <title>Sequence and analysis of chromosome 2 of the plant Arabidopsis thaliana.</title>
        <authorList>
            <person name="Lin X."/>
            <person name="Kaul S."/>
            <person name="Rounsley S.D."/>
            <person name="Shea T.P."/>
            <person name="Benito M.-I."/>
            <person name="Town C.D."/>
            <person name="Fujii C.Y."/>
            <person name="Mason T.M."/>
            <person name="Bowman C.L."/>
            <person name="Barnstead M.E."/>
            <person name="Feldblyum T.V."/>
            <person name="Buell C.R."/>
            <person name="Ketchum K.A."/>
            <person name="Lee J.J."/>
            <person name="Ronning C.M."/>
            <person name="Koo H.L."/>
            <person name="Moffat K.S."/>
            <person name="Cronin L.A."/>
            <person name="Shen M."/>
            <person name="Pai G."/>
            <person name="Van Aken S."/>
            <person name="Umayam L."/>
            <person name="Tallon L.J."/>
            <person name="Gill J.E."/>
            <person name="Adams M.D."/>
            <person name="Carrera A.J."/>
            <person name="Creasy T.H."/>
            <person name="Goodman H.M."/>
            <person name="Somerville C.R."/>
            <person name="Copenhaver G.P."/>
            <person name="Preuss D."/>
            <person name="Nierman W.C."/>
            <person name="White O."/>
            <person name="Eisen J.A."/>
            <person name="Salzberg S.L."/>
            <person name="Fraser C.M."/>
            <person name="Venter J.C."/>
        </authorList>
    </citation>
    <scope>NUCLEOTIDE SEQUENCE [LARGE SCALE GENOMIC DNA]</scope>
    <source>
        <strain>cv. Columbia</strain>
    </source>
</reference>
<reference key="4">
    <citation type="journal article" date="2017" name="Plant J.">
        <title>Araport11: a complete reannotation of the Arabidopsis thaliana reference genome.</title>
        <authorList>
            <person name="Cheng C.Y."/>
            <person name="Krishnakumar V."/>
            <person name="Chan A.P."/>
            <person name="Thibaud-Nissen F."/>
            <person name="Schobel S."/>
            <person name="Town C.D."/>
        </authorList>
    </citation>
    <scope>GENOME REANNOTATION</scope>
    <source>
        <strain>cv. Columbia</strain>
    </source>
</reference>
<reference key="5">
    <citation type="submission" date="2002-03" db="EMBL/GenBank/DDBJ databases">
        <title>Full-length cDNA from Arabidopsis thaliana.</title>
        <authorList>
            <person name="Brover V.V."/>
            <person name="Troukhan M.E."/>
            <person name="Alexandrov N.A."/>
            <person name="Lu Y.-P."/>
            <person name="Flavell R.B."/>
            <person name="Feldmann K.A."/>
        </authorList>
    </citation>
    <scope>NUCLEOTIDE SEQUENCE [LARGE SCALE MRNA] OF 3252-3574 (ISOFORM 3)</scope>
</reference>
<reference key="6">
    <citation type="journal article" date="2005" name="Genes Dev.">
        <title>WUSCHEL is a primary target for transcriptional regulation by SPLAYED in dynamic control of stem cell fate in Arabidopsis.</title>
        <authorList>
            <person name="Kwon C.S."/>
            <person name="Chen C."/>
            <person name="Wagner D."/>
        </authorList>
    </citation>
    <scope>FUNCTION</scope>
    <scope>DISRUPTION PHENOTYPE</scope>
    <source>
        <strain>cv. Landsberg erecta</strain>
    </source>
</reference>
<reference key="7">
    <citation type="journal article" date="2006" name="Development">
        <title>A role for chromatin remodeling in regulation of CUC gene expression in the Arabidopsis cotyledon boundary.</title>
        <authorList>
            <person name="Kwon C.S."/>
            <person name="Hibara K."/>
            <person name="Pfluger J."/>
            <person name="Bezhani S."/>
            <person name="Metha H."/>
            <person name="Aida M."/>
            <person name="Tasaka M."/>
            <person name="Wagner D."/>
        </authorList>
    </citation>
    <scope>FUNCTION</scope>
    <scope>DISRUPTION PHENOTYPE</scope>
    <source>
        <strain>cv. Landsberg erecta</strain>
    </source>
</reference>
<reference key="8">
    <citation type="journal article" date="2007" name="Plant Cell">
        <title>Unique, shared, and redundant roles for the Arabidopsis SWI/SNF chromatin remodeling ATPases BRAHMA and SPLAYED.</title>
        <authorList>
            <person name="Bezhani S."/>
            <person name="Winter C."/>
            <person name="Hershman S."/>
            <person name="Wagner J.D."/>
            <person name="Kennedy J.F."/>
            <person name="Kwon C.S."/>
            <person name="Pfluger J."/>
            <person name="Su Y."/>
            <person name="Wagner D."/>
        </authorList>
    </citation>
    <scope>FUNCTION</scope>
    <scope>DISRUPTION PHENOTYPE</scope>
    <source>
        <strain>cv. Landsberg erecta</strain>
    </source>
</reference>
<reference key="9">
    <citation type="journal article" date="2008" name="J. Proteome Res.">
        <title>Site-specific phosphorylation profiling of Arabidopsis proteins by mass spectrometry and peptide chip analysis.</title>
        <authorList>
            <person name="de la Fuente van Bentem S."/>
            <person name="Anrather D."/>
            <person name="Dohnal I."/>
            <person name="Roitinger E."/>
            <person name="Csaszar E."/>
            <person name="Joore J."/>
            <person name="Buijnink J."/>
            <person name="Carreri A."/>
            <person name="Forzani C."/>
            <person name="Lorkovic Z.J."/>
            <person name="Barta A."/>
            <person name="Lecourieux D."/>
            <person name="Verhounig A."/>
            <person name="Jonak C."/>
            <person name="Hirt H."/>
        </authorList>
    </citation>
    <scope>SUBCELLULAR LOCATION</scope>
    <scope>IDENTIFICATION BY MASS SPECTROMETRY [LARGE SCALE ANALYSIS]</scope>
    <source>
        <tissue>Root</tissue>
    </source>
</reference>
<reference key="10">
    <citation type="journal article" date="2008" name="Plant Cell">
        <title>Mutation of Arabidopsis BARD1 causes meristem defects by failing to confine WUSCHEL expression to the organizing center.</title>
        <authorList>
            <person name="Han P."/>
            <person name="Li Q."/>
            <person name="Zhu Y.-X."/>
        </authorList>
    </citation>
    <scope>INTERACTION WITH BARD1/ROW1</scope>
</reference>
<reference key="11">
    <citation type="journal article" date="2008" name="PLoS Pathog.">
        <title>The chromatin remodeler SPLAYED regulates specific stress signaling pathways.</title>
        <authorList>
            <person name="Walley J.W."/>
            <person name="Rowe H.C."/>
            <person name="Xiao Y."/>
            <person name="Chehab E.W."/>
            <person name="Kliebenstein D.J."/>
            <person name="Wagner D."/>
            <person name="Dehesh K."/>
        </authorList>
    </citation>
    <scope>FUNCTION</scope>
    <scope>DISRUPTION PHENOTYPE</scope>
    <scope>INDUCTION BY WOUNDING</scope>
    <source>
        <strain>cv. Landsberg erecta</strain>
    </source>
</reference>
<reference key="12">
    <citation type="journal article" date="2009" name="Plant Physiol.">
        <title>Large-scale Arabidopsis phosphoproteome profiling reveals novel chloroplast kinase substrates and phosphorylation networks.</title>
        <authorList>
            <person name="Reiland S."/>
            <person name="Messerli G."/>
            <person name="Baerenfaller K."/>
            <person name="Gerrits B."/>
            <person name="Endler A."/>
            <person name="Grossmann J."/>
            <person name="Gruissem W."/>
            <person name="Baginsky S."/>
        </authorList>
    </citation>
    <scope>IDENTIFICATION BY MASS SPECTROMETRY [LARGE SCALE ANALYSIS]</scope>
</reference>
<reference key="13">
    <citation type="journal article" date="2012" name="Proc. Natl. Acad. Sci. U.S.A.">
        <title>SWI2/SNF2 chromatin remodeling ATPases overcome polycomb repression and control floral organ identity with the LEAFY and SEPALLATA3 transcription factors.</title>
        <authorList>
            <person name="Wu M.F."/>
            <person name="Sang Y."/>
            <person name="Bezhani S."/>
            <person name="Yamaguchi N."/>
            <person name="Han S.K."/>
            <person name="Li Z."/>
            <person name="Su Y."/>
            <person name="Slewinski T.L."/>
            <person name="Wagner D."/>
        </authorList>
    </citation>
    <scope>FUNCTION</scope>
    <scope>DISRUPTION PHENOTYPE</scope>
    <scope>INTERACTION WITH LFY</scope>
</reference>
<reference key="14">
    <citation type="journal article" date="2013" name="PLoS ONE">
        <title>Genome-wide comparative in silico analysis of the RNA helicase gene family in Zea mays and Glycine max: a comparison with Arabidopsis and Oryza sativa.</title>
        <authorList>
            <person name="Xu R."/>
            <person name="Zhang S."/>
            <person name="Huang J."/>
            <person name="Zheng C."/>
        </authorList>
    </citation>
    <scope>GENE FAMILY</scope>
</reference>
<gene>
    <name type="primary">SYD</name>
    <name type="synonym">CHR3</name>
    <name type="ordered locus">At2g28290</name>
    <name type="ORF">T3B23</name>
</gene>
<keyword id="KW-0025">Alternative splicing</keyword>
<keyword id="KW-0067">ATP-binding</keyword>
<keyword id="KW-0963">Cytoplasm</keyword>
<keyword id="KW-0238">DNA-binding</keyword>
<keyword id="KW-0936">Ethylene signaling pathway</keyword>
<keyword id="KW-0347">Helicase</keyword>
<keyword id="KW-0378">Hydrolase</keyword>
<keyword id="KW-1184">Jasmonic acid signaling pathway</keyword>
<keyword id="KW-0547">Nucleotide-binding</keyword>
<keyword id="KW-0539">Nucleus</keyword>
<keyword id="KW-0597">Phosphoprotein</keyword>
<keyword id="KW-0611">Plant defense</keyword>
<keyword id="KW-1185">Reference proteome</keyword>
<keyword id="KW-0804">Transcription</keyword>
<keyword id="KW-0805">Transcription regulation</keyword>
<organism>
    <name type="scientific">Arabidopsis thaliana</name>
    <name type="common">Mouse-ear cress</name>
    <dbReference type="NCBI Taxonomy" id="3702"/>
    <lineage>
        <taxon>Eukaryota</taxon>
        <taxon>Viridiplantae</taxon>
        <taxon>Streptophyta</taxon>
        <taxon>Embryophyta</taxon>
        <taxon>Tracheophyta</taxon>
        <taxon>Spermatophyta</taxon>
        <taxon>Magnoliopsida</taxon>
        <taxon>eudicotyledons</taxon>
        <taxon>Gunneridae</taxon>
        <taxon>Pentapetalae</taxon>
        <taxon>rosids</taxon>
        <taxon>malvids</taxon>
        <taxon>Brassicales</taxon>
        <taxon>Brassicaceae</taxon>
        <taxon>Camelineae</taxon>
        <taxon>Arabidopsis</taxon>
    </lineage>
</organism>